<accession>Q7ZYD5</accession>
<gene>
    <name type="primary">slc25a25</name>
    <name type="synonym">scamc2</name>
</gene>
<organism>
    <name type="scientific">Xenopus laevis</name>
    <name type="common">African clawed frog</name>
    <dbReference type="NCBI Taxonomy" id="8355"/>
    <lineage>
        <taxon>Eukaryota</taxon>
        <taxon>Metazoa</taxon>
        <taxon>Chordata</taxon>
        <taxon>Craniata</taxon>
        <taxon>Vertebrata</taxon>
        <taxon>Euteleostomi</taxon>
        <taxon>Amphibia</taxon>
        <taxon>Batrachia</taxon>
        <taxon>Anura</taxon>
        <taxon>Pipoidea</taxon>
        <taxon>Pipidae</taxon>
        <taxon>Xenopodinae</taxon>
        <taxon>Xenopus</taxon>
        <taxon>Xenopus</taxon>
    </lineage>
</organism>
<keyword id="KW-0106">Calcium</keyword>
<keyword id="KW-0472">Membrane</keyword>
<keyword id="KW-0479">Metal-binding</keyword>
<keyword id="KW-0496">Mitochondrion</keyword>
<keyword id="KW-0999">Mitochondrion inner membrane</keyword>
<keyword id="KW-1185">Reference proteome</keyword>
<keyword id="KW-0677">Repeat</keyword>
<keyword id="KW-0812">Transmembrane</keyword>
<keyword id="KW-1133">Transmembrane helix</keyword>
<keyword id="KW-0813">Transport</keyword>
<dbReference type="EMBL" id="BC043834">
    <property type="protein sequence ID" value="AAH43834.1"/>
    <property type="molecule type" value="mRNA"/>
</dbReference>
<dbReference type="RefSeq" id="NP_001080348.1">
    <property type="nucleotide sequence ID" value="NM_001086879.1"/>
</dbReference>
<dbReference type="SMR" id="Q7ZYD5"/>
<dbReference type="DNASU" id="380040"/>
<dbReference type="GeneID" id="380040"/>
<dbReference type="KEGG" id="xla:380040"/>
<dbReference type="AGR" id="Xenbase:XB-GENE-5933262"/>
<dbReference type="CTD" id="380040"/>
<dbReference type="Xenbase" id="XB-GENE-5933262">
    <property type="gene designation" value="slc25a25.L"/>
</dbReference>
<dbReference type="OrthoDB" id="270584at2759"/>
<dbReference type="Proteomes" id="UP000186698">
    <property type="component" value="Chromosome 8L"/>
</dbReference>
<dbReference type="Bgee" id="380040">
    <property type="expression patterns" value="Expressed in kidney and 19 other cell types or tissues"/>
</dbReference>
<dbReference type="GO" id="GO:0005743">
    <property type="term" value="C:mitochondrial inner membrane"/>
    <property type="evidence" value="ECO:0007669"/>
    <property type="project" value="UniProtKB-SubCell"/>
</dbReference>
<dbReference type="GO" id="GO:0005347">
    <property type="term" value="F:ATP transmembrane transporter activity"/>
    <property type="evidence" value="ECO:0000318"/>
    <property type="project" value="GO_Central"/>
</dbReference>
<dbReference type="GO" id="GO:0005509">
    <property type="term" value="F:calcium ion binding"/>
    <property type="evidence" value="ECO:0007669"/>
    <property type="project" value="InterPro"/>
</dbReference>
<dbReference type="GO" id="GO:0015866">
    <property type="term" value="P:ADP transport"/>
    <property type="evidence" value="ECO:0000318"/>
    <property type="project" value="GO_Central"/>
</dbReference>
<dbReference type="GO" id="GO:0015867">
    <property type="term" value="P:ATP transport"/>
    <property type="evidence" value="ECO:0000318"/>
    <property type="project" value="GO_Central"/>
</dbReference>
<dbReference type="FunFam" id="1.10.238.10:FF:000098">
    <property type="entry name" value="calcium-binding mitochondrial carrier protein SCaMC-2 isoform X1"/>
    <property type="match status" value="1"/>
</dbReference>
<dbReference type="FunFam" id="1.10.238.10:FF:000028">
    <property type="entry name" value="Putative calcium-binding mitochondrial carrier protein scamc-2"/>
    <property type="match status" value="1"/>
</dbReference>
<dbReference type="FunFam" id="1.50.40.10:FF:000003">
    <property type="entry name" value="Putative calcium-binding mitochondrial carrier protein scamc-2"/>
    <property type="match status" value="1"/>
</dbReference>
<dbReference type="Gene3D" id="1.10.238.10">
    <property type="entry name" value="EF-hand"/>
    <property type="match status" value="2"/>
</dbReference>
<dbReference type="Gene3D" id="1.50.40.10">
    <property type="entry name" value="Mitochondrial carrier domain"/>
    <property type="match status" value="1"/>
</dbReference>
<dbReference type="InterPro" id="IPR011992">
    <property type="entry name" value="EF-hand-dom_pair"/>
</dbReference>
<dbReference type="InterPro" id="IPR018247">
    <property type="entry name" value="EF_Hand_1_Ca_BS"/>
</dbReference>
<dbReference type="InterPro" id="IPR002048">
    <property type="entry name" value="EF_hand_dom"/>
</dbReference>
<dbReference type="InterPro" id="IPR002167">
    <property type="entry name" value="GDC-like"/>
</dbReference>
<dbReference type="InterPro" id="IPR002067">
    <property type="entry name" value="Mit_carrier"/>
</dbReference>
<dbReference type="InterPro" id="IPR018108">
    <property type="entry name" value="Mitochondrial_sb/sol_carrier"/>
</dbReference>
<dbReference type="InterPro" id="IPR023395">
    <property type="entry name" value="Mt_carrier_dom_sf"/>
</dbReference>
<dbReference type="PANTHER" id="PTHR24089">
    <property type="entry name" value="SOLUTE CARRIER FAMILY 25"/>
    <property type="match status" value="1"/>
</dbReference>
<dbReference type="Pfam" id="PF13499">
    <property type="entry name" value="EF-hand_7"/>
    <property type="match status" value="2"/>
</dbReference>
<dbReference type="Pfam" id="PF00153">
    <property type="entry name" value="Mito_carr"/>
    <property type="match status" value="3"/>
</dbReference>
<dbReference type="PRINTS" id="PR00928">
    <property type="entry name" value="GRAVESDC"/>
</dbReference>
<dbReference type="PRINTS" id="PR00926">
    <property type="entry name" value="MITOCARRIER"/>
</dbReference>
<dbReference type="SMART" id="SM00054">
    <property type="entry name" value="EFh"/>
    <property type="match status" value="4"/>
</dbReference>
<dbReference type="SUPFAM" id="SSF47473">
    <property type="entry name" value="EF-hand"/>
    <property type="match status" value="1"/>
</dbReference>
<dbReference type="SUPFAM" id="SSF103506">
    <property type="entry name" value="Mitochondrial carrier"/>
    <property type="match status" value="1"/>
</dbReference>
<dbReference type="PROSITE" id="PS00018">
    <property type="entry name" value="EF_HAND_1"/>
    <property type="match status" value="2"/>
</dbReference>
<dbReference type="PROSITE" id="PS50222">
    <property type="entry name" value="EF_HAND_2"/>
    <property type="match status" value="4"/>
</dbReference>
<dbReference type="PROSITE" id="PS50920">
    <property type="entry name" value="SOLCAR"/>
    <property type="match status" value="3"/>
</dbReference>
<proteinExistence type="evidence at transcript level"/>
<protein>
    <recommendedName>
        <fullName>Calcium-binding mitochondrial carrier protein SCaMC-2</fullName>
    </recommendedName>
    <alternativeName>
        <fullName>Small calcium-binding mitochondrial carrier protein 2</fullName>
    </alternativeName>
    <alternativeName>
        <fullName>Solute carrier family 25 member 25</fullName>
    </alternativeName>
</protein>
<reference key="1">
    <citation type="submission" date="2003-01" db="EMBL/GenBank/DDBJ databases">
        <authorList>
            <consortium name="NIH - Xenopus Gene Collection (XGC) project"/>
        </authorList>
    </citation>
    <scope>NUCLEOTIDE SEQUENCE [LARGE SCALE MRNA]</scope>
    <source>
        <tissue>Embryo</tissue>
    </source>
</reference>
<comment type="function">
    <text evidence="1">Calcium-dependent mitochondrial solute carrier.</text>
</comment>
<comment type="subcellular location">
    <subcellularLocation>
        <location evidence="1">Mitochondrion inner membrane</location>
        <topology evidence="1">Multi-pass membrane protein</topology>
    </subcellularLocation>
</comment>
<comment type="similarity">
    <text evidence="4">Belongs to the mitochondrial carrier (TC 2.A.29) family.</text>
</comment>
<sequence>MARPRSLVSPLLSGVFCQCDTVSGAPHSHETPASPSLAAAALAADPCGGLLCGGPEHERRLQILFQELDVNKDGAICINDLAVGLKRLGVHRTELELRKIVKAGDKDQDGQLDFDEFVHYLRDHEKKLRLVFKSLDKKNDGRIDAQEIMQSLRDLGVNISEQQAEKILKSMDKNGTMTIDWNEWRDYHLLHSAENIPEIILYWKHSTIFDVGENLLVPDEFTVEEKQTGMWWRHLVAGGGAGAVSRTCTAPLDRLKVLMQVHASRSNNMSILGGFTHMIREGGFRSLWRGNGINVIKIAPESAIKFMAYEQIKRIIGSNQETLGIHERFVAGSLAGVIAQSSIYPMEVLKTRMALRKTGQYQGVLDCGKKILLQEGLSAFYKGYVPNMLGIIPYAGIDLAVYETLKNAWLQRYATSSADPGVFVLLACGTVSSTCGQLASYPLALVRTRMQAEASVEGAPQMTMSKLFKHIVKTEGAFGLYRGLAPNFMKVIPAVSISYVVYENLKLTLGVQSR</sequence>
<name>SCMC2_XENLA</name>
<feature type="chain" id="PRO_0000317607" description="Calcium-binding mitochondrial carrier protein SCaMC-2">
    <location>
        <begin position="1"/>
        <end position="514"/>
    </location>
</feature>
<feature type="topological domain" description="Mitochondrial intermembrane" evidence="2">
    <location>
        <begin position="1"/>
        <end position="234"/>
    </location>
</feature>
<feature type="transmembrane region" description="Helical; Name=1" evidence="2">
    <location>
        <begin position="235"/>
        <end position="252"/>
    </location>
</feature>
<feature type="topological domain" description="Mitochondrial matrix" evidence="2">
    <location>
        <begin position="253"/>
        <end position="289"/>
    </location>
</feature>
<feature type="transmembrane region" description="Helical; Name=2" evidence="2">
    <location>
        <begin position="290"/>
        <end position="309"/>
    </location>
</feature>
<feature type="topological domain" description="Mitochondrial intermembrane" evidence="2">
    <location>
        <begin position="310"/>
        <end position="332"/>
    </location>
</feature>
<feature type="transmembrane region" description="Helical; Name=3" evidence="2">
    <location>
        <begin position="333"/>
        <end position="346"/>
    </location>
</feature>
<feature type="topological domain" description="Mitochondrial matrix" evidence="2">
    <location>
        <begin position="347"/>
        <end position="382"/>
    </location>
</feature>
<feature type="transmembrane region" description="Helical; Name=4" evidence="2">
    <location>
        <begin position="383"/>
        <end position="402"/>
    </location>
</feature>
<feature type="topological domain" description="Mitochondrial intermembrane" evidence="2">
    <location>
        <begin position="403"/>
        <end position="425"/>
    </location>
</feature>
<feature type="transmembrane region" description="Helical; Name=5" evidence="2">
    <location>
        <begin position="426"/>
        <end position="443"/>
    </location>
</feature>
<feature type="topological domain" description="Mitochondrial matrix" evidence="2">
    <location>
        <begin position="444"/>
        <end position="482"/>
    </location>
</feature>
<feature type="transmembrane region" description="Helical; Name=6" evidence="2">
    <location>
        <begin position="483"/>
        <end position="502"/>
    </location>
</feature>
<feature type="topological domain" description="Mitochondrial intermembrane" evidence="2">
    <location>
        <begin position="503"/>
        <end position="514"/>
    </location>
</feature>
<feature type="domain" description="EF-hand 1" evidence="3">
    <location>
        <begin position="56"/>
        <end position="91"/>
    </location>
</feature>
<feature type="domain" description="EF-hand 2" evidence="3">
    <location>
        <begin position="92"/>
        <end position="122"/>
    </location>
</feature>
<feature type="domain" description="EF-hand 3" evidence="3">
    <location>
        <begin position="123"/>
        <end position="158"/>
    </location>
</feature>
<feature type="domain" description="EF-hand 4" evidence="3">
    <location>
        <begin position="159"/>
        <end position="194"/>
    </location>
</feature>
<feature type="repeat" description="Solcar 1">
    <location>
        <begin position="229"/>
        <end position="315"/>
    </location>
</feature>
<feature type="repeat" description="Solcar 2">
    <location>
        <begin position="323"/>
        <end position="408"/>
    </location>
</feature>
<feature type="repeat" description="Solcar 3">
    <location>
        <begin position="420"/>
        <end position="508"/>
    </location>
</feature>
<feature type="binding site" evidence="3">
    <location>
        <position position="69"/>
    </location>
    <ligand>
        <name>Ca(2+)</name>
        <dbReference type="ChEBI" id="CHEBI:29108"/>
        <label>1</label>
    </ligand>
</feature>
<feature type="binding site" evidence="3">
    <location>
        <position position="71"/>
    </location>
    <ligand>
        <name>Ca(2+)</name>
        <dbReference type="ChEBI" id="CHEBI:29108"/>
        <label>1</label>
    </ligand>
</feature>
<feature type="binding site" evidence="3">
    <location>
        <position position="73"/>
    </location>
    <ligand>
        <name>Ca(2+)</name>
        <dbReference type="ChEBI" id="CHEBI:29108"/>
        <label>1</label>
    </ligand>
</feature>
<feature type="binding site" evidence="3">
    <location>
        <position position="80"/>
    </location>
    <ligand>
        <name>Ca(2+)</name>
        <dbReference type="ChEBI" id="CHEBI:29108"/>
        <label>1</label>
    </ligand>
</feature>
<feature type="binding site" evidence="3">
    <location>
        <position position="105"/>
    </location>
    <ligand>
        <name>Ca(2+)</name>
        <dbReference type="ChEBI" id="CHEBI:29108"/>
        <label>2</label>
    </ligand>
</feature>
<feature type="binding site" evidence="3">
    <location>
        <position position="107"/>
    </location>
    <ligand>
        <name>Ca(2+)</name>
        <dbReference type="ChEBI" id="CHEBI:29108"/>
        <label>2</label>
    </ligand>
</feature>
<feature type="binding site" evidence="3">
    <location>
        <position position="109"/>
    </location>
    <ligand>
        <name>Ca(2+)</name>
        <dbReference type="ChEBI" id="CHEBI:29108"/>
        <label>2</label>
    </ligand>
</feature>
<feature type="binding site" evidence="3">
    <location>
        <position position="111"/>
    </location>
    <ligand>
        <name>Ca(2+)</name>
        <dbReference type="ChEBI" id="CHEBI:29108"/>
        <label>2</label>
    </ligand>
</feature>
<feature type="binding site" evidence="3">
    <location>
        <position position="116"/>
    </location>
    <ligand>
        <name>Ca(2+)</name>
        <dbReference type="ChEBI" id="CHEBI:29108"/>
        <label>2</label>
    </ligand>
</feature>
<evidence type="ECO:0000250" key="1"/>
<evidence type="ECO:0000255" key="2"/>
<evidence type="ECO:0000255" key="3">
    <source>
        <dbReference type="PROSITE-ProRule" id="PRU00448"/>
    </source>
</evidence>
<evidence type="ECO:0000305" key="4"/>